<organism>
    <name type="scientific">Klebsiella pneumoniae</name>
    <dbReference type="NCBI Taxonomy" id="573"/>
    <lineage>
        <taxon>Bacteria</taxon>
        <taxon>Pseudomonadati</taxon>
        <taxon>Pseudomonadota</taxon>
        <taxon>Gammaproteobacteria</taxon>
        <taxon>Enterobacterales</taxon>
        <taxon>Enterobacteriaceae</taxon>
        <taxon>Klebsiella/Raoultella group</taxon>
        <taxon>Klebsiella</taxon>
        <taxon>Klebsiella pneumoniae complex</taxon>
    </lineage>
</organism>
<dbReference type="EC" id="2.7.13.3"/>
<dbReference type="EMBL" id="M31794">
    <property type="protein sequence ID" value="AAA25123.1"/>
    <property type="molecule type" value="Genomic_DNA"/>
</dbReference>
<dbReference type="PIR" id="D44753">
    <property type="entry name" value="D44753"/>
</dbReference>
<dbReference type="SMR" id="P45608"/>
<dbReference type="BRENDA" id="2.7.13.3">
    <property type="organism ID" value="2814"/>
</dbReference>
<dbReference type="GO" id="GO:0005886">
    <property type="term" value="C:plasma membrane"/>
    <property type="evidence" value="ECO:0007669"/>
    <property type="project" value="UniProtKB-SubCell"/>
</dbReference>
<dbReference type="GO" id="GO:0005524">
    <property type="term" value="F:ATP binding"/>
    <property type="evidence" value="ECO:0007669"/>
    <property type="project" value="UniProtKB-KW"/>
</dbReference>
<dbReference type="GO" id="GO:0004721">
    <property type="term" value="F:phosphoprotein phosphatase activity"/>
    <property type="evidence" value="ECO:0007669"/>
    <property type="project" value="InterPro"/>
</dbReference>
<dbReference type="GO" id="GO:0000155">
    <property type="term" value="F:phosphorelay sensor kinase activity"/>
    <property type="evidence" value="ECO:0007669"/>
    <property type="project" value="InterPro"/>
</dbReference>
<dbReference type="GO" id="GO:0016036">
    <property type="term" value="P:cellular response to phosphate starvation"/>
    <property type="evidence" value="ECO:0007669"/>
    <property type="project" value="TreeGrafter"/>
</dbReference>
<dbReference type="GO" id="GO:0006817">
    <property type="term" value="P:phosphate ion transport"/>
    <property type="evidence" value="ECO:0007669"/>
    <property type="project" value="UniProtKB-KW"/>
</dbReference>
<dbReference type="GO" id="GO:0006355">
    <property type="term" value="P:regulation of DNA-templated transcription"/>
    <property type="evidence" value="ECO:0007669"/>
    <property type="project" value="InterPro"/>
</dbReference>
<dbReference type="CDD" id="cd00082">
    <property type="entry name" value="HisKA"/>
    <property type="match status" value="1"/>
</dbReference>
<dbReference type="CDD" id="cd00130">
    <property type="entry name" value="PAS"/>
    <property type="match status" value="1"/>
</dbReference>
<dbReference type="FunFam" id="3.30.450.20:FF:000044">
    <property type="entry name" value="Phosphate regulon sensor histidine kinase PhoR"/>
    <property type="match status" value="1"/>
</dbReference>
<dbReference type="FunFam" id="3.30.565.10:FF:000032">
    <property type="entry name" value="Phosphate regulon sensor histidine kinase PhoR"/>
    <property type="match status" value="1"/>
</dbReference>
<dbReference type="FunFam" id="1.10.287.130:FF:000001">
    <property type="entry name" value="Two-component sensor histidine kinase"/>
    <property type="match status" value="1"/>
</dbReference>
<dbReference type="Gene3D" id="1.10.287.130">
    <property type="match status" value="1"/>
</dbReference>
<dbReference type="Gene3D" id="3.30.565.10">
    <property type="entry name" value="Histidine kinase-like ATPase, C-terminal domain"/>
    <property type="match status" value="1"/>
</dbReference>
<dbReference type="Gene3D" id="3.30.450.20">
    <property type="entry name" value="PAS domain"/>
    <property type="match status" value="1"/>
</dbReference>
<dbReference type="InterPro" id="IPR050351">
    <property type="entry name" value="2-comp_sensor_kinase"/>
</dbReference>
<dbReference type="InterPro" id="IPR036890">
    <property type="entry name" value="HATPase_C_sf"/>
</dbReference>
<dbReference type="InterPro" id="IPR005467">
    <property type="entry name" value="His_kinase_dom"/>
</dbReference>
<dbReference type="InterPro" id="IPR003661">
    <property type="entry name" value="HisK_dim/P_dom"/>
</dbReference>
<dbReference type="InterPro" id="IPR036097">
    <property type="entry name" value="HisK_dim/P_sf"/>
</dbReference>
<dbReference type="InterPro" id="IPR000014">
    <property type="entry name" value="PAS"/>
</dbReference>
<dbReference type="InterPro" id="IPR035965">
    <property type="entry name" value="PAS-like_dom_sf"/>
</dbReference>
<dbReference type="InterPro" id="IPR013767">
    <property type="entry name" value="PAS_fold"/>
</dbReference>
<dbReference type="InterPro" id="IPR021766">
    <property type="entry name" value="PhoR"/>
</dbReference>
<dbReference type="InterPro" id="IPR004358">
    <property type="entry name" value="Sig_transdc_His_kin-like_C"/>
</dbReference>
<dbReference type="InterPro" id="IPR014310">
    <property type="entry name" value="Sig_transdc_His_kinase_PhoR"/>
</dbReference>
<dbReference type="NCBIfam" id="TIGR02966">
    <property type="entry name" value="phoR_proteo"/>
    <property type="match status" value="1"/>
</dbReference>
<dbReference type="NCBIfam" id="NF008235">
    <property type="entry name" value="PRK11006.1"/>
    <property type="match status" value="1"/>
</dbReference>
<dbReference type="PANTHER" id="PTHR45453">
    <property type="entry name" value="PHOSPHATE REGULON SENSOR PROTEIN PHOR"/>
    <property type="match status" value="1"/>
</dbReference>
<dbReference type="PANTHER" id="PTHR45453:SF1">
    <property type="entry name" value="PHOSPHATE REGULON SENSOR PROTEIN PHOR"/>
    <property type="match status" value="1"/>
</dbReference>
<dbReference type="Pfam" id="PF02518">
    <property type="entry name" value="HATPase_c"/>
    <property type="match status" value="1"/>
</dbReference>
<dbReference type="Pfam" id="PF00512">
    <property type="entry name" value="HisKA"/>
    <property type="match status" value="1"/>
</dbReference>
<dbReference type="Pfam" id="PF00989">
    <property type="entry name" value="PAS"/>
    <property type="match status" value="1"/>
</dbReference>
<dbReference type="Pfam" id="PF11808">
    <property type="entry name" value="PhoR"/>
    <property type="match status" value="1"/>
</dbReference>
<dbReference type="PRINTS" id="PR00344">
    <property type="entry name" value="BCTRLSENSOR"/>
</dbReference>
<dbReference type="SMART" id="SM00387">
    <property type="entry name" value="HATPase_c"/>
    <property type="match status" value="1"/>
</dbReference>
<dbReference type="SMART" id="SM00388">
    <property type="entry name" value="HisKA"/>
    <property type="match status" value="1"/>
</dbReference>
<dbReference type="SMART" id="SM00091">
    <property type="entry name" value="PAS"/>
    <property type="match status" value="1"/>
</dbReference>
<dbReference type="SUPFAM" id="SSF55874">
    <property type="entry name" value="ATPase domain of HSP90 chaperone/DNA topoisomerase II/histidine kinase"/>
    <property type="match status" value="1"/>
</dbReference>
<dbReference type="SUPFAM" id="SSF47384">
    <property type="entry name" value="Homodimeric domain of signal transducing histidine kinase"/>
    <property type="match status" value="1"/>
</dbReference>
<dbReference type="SUPFAM" id="SSF55785">
    <property type="entry name" value="PYP-like sensor domain (PAS domain)"/>
    <property type="match status" value="1"/>
</dbReference>
<dbReference type="PROSITE" id="PS50109">
    <property type="entry name" value="HIS_KIN"/>
    <property type="match status" value="1"/>
</dbReference>
<protein>
    <recommendedName>
        <fullName>Phosphate regulon sensor protein PhoR</fullName>
        <ecNumber>2.7.13.3</ecNumber>
    </recommendedName>
</protein>
<sequence length="431" mass="49461">MLERLSWKRLALELFLACIPALILGAFVGHLPWFLLAAVTGLLIWHFWNLMRLSWWLWVDRSMTPPPGRGSWEPLLYGLHQMQMRNKKRRRELGSLIKRFRSGAESLPDAVVLTTEEGAIFWCNGLAQQILNLRWPDDSGQNILNLLRYPEFANYLKQRDFSKPLNLVLNNARHLEIRVMPYTDKQWLMVARDVTQMHQLEGARRNFFANVSHELRTPLTVLQGYLEMMQEQVLEGATREKALHTMREQTQRMEGLVKQLLTLSRIEAAPALAMNDRIDVPMMLRVVEREAQTLSQEKQTLIFTVDEQLKVLGNEEQLRSAISNLVYNAVNHTPPGTEIRVSWQRTPQGALFSVEDNGPGIAPEHIPLLTERFYRGDKARSRQTGGSGLGLAIVKHAVNHHDSRLEIDSTVGKGTRFSFLLPERLIARNDA</sequence>
<name>PHOR_KLEPN</name>
<proteinExistence type="inferred from homology"/>
<accession>P45608</accession>
<evidence type="ECO:0000255" key="1"/>
<evidence type="ECO:0000255" key="2">
    <source>
        <dbReference type="PROSITE-ProRule" id="PRU00107"/>
    </source>
</evidence>
<gene>
    <name type="primary">phoR</name>
</gene>
<reference key="1">
    <citation type="journal article" date="1989" name="J. Bacteriol.">
        <title>Phosphate regulon in members of the family Enterobacteriaceae: comparison of the phoB-phoR operons of Escherichia coli, Shigella dysenteriae, and Klebsiella pneumoniae.</title>
        <authorList>
            <person name="Lee T.Y."/>
            <person name="Makino K."/>
            <person name="Shinagawa H."/>
            <person name="Amemura M."/>
            <person name="Nakata A."/>
        </authorList>
    </citation>
    <scope>NUCLEOTIDE SEQUENCE [GENOMIC DNA]</scope>
</reference>
<feature type="chain" id="PRO_0000074848" description="Phosphate regulon sensor protein PhoR">
    <location>
        <begin position="1"/>
        <end position="431"/>
    </location>
</feature>
<feature type="topological domain" description="Cytoplasmic" evidence="1">
    <location>
        <begin position="1"/>
        <end position="13"/>
    </location>
</feature>
<feature type="transmembrane region" description="Helical" evidence="1">
    <location>
        <begin position="14"/>
        <end position="34"/>
    </location>
</feature>
<feature type="topological domain" description="Periplasmic" evidence="1">
    <location>
        <begin position="35"/>
        <end position="38"/>
    </location>
</feature>
<feature type="transmembrane region" description="Helical" evidence="1">
    <location>
        <begin position="39"/>
        <end position="59"/>
    </location>
</feature>
<feature type="topological domain" description="Cytoplasmic" evidence="1">
    <location>
        <begin position="60"/>
        <end position="431"/>
    </location>
</feature>
<feature type="domain" description="PAS">
    <location>
        <begin position="98"/>
        <end position="166"/>
    </location>
</feature>
<feature type="domain" description="Histidine kinase" evidence="2">
    <location>
        <begin position="210"/>
        <end position="425"/>
    </location>
</feature>
<feature type="modified residue" description="Phosphohistidine; by autocatalysis" evidence="2">
    <location>
        <position position="213"/>
    </location>
</feature>
<comment type="function">
    <text>Member of the two-component regulatory system PhoR/PhoB involved in the phosphate regulon genes expression. PhoR may function as a membrane-associated protein kinase that phosphorylates PhoB in response to environmental signals.</text>
</comment>
<comment type="catalytic activity">
    <reaction>
        <text>ATP + protein L-histidine = ADP + protein N-phospho-L-histidine.</text>
        <dbReference type="EC" id="2.7.13.3"/>
    </reaction>
</comment>
<comment type="subcellular location">
    <subcellularLocation>
        <location>Cell inner membrane</location>
        <topology>Multi-pass membrane protein</topology>
    </subcellularLocation>
</comment>
<keyword id="KW-0067">ATP-binding</keyword>
<keyword id="KW-0997">Cell inner membrane</keyword>
<keyword id="KW-1003">Cell membrane</keyword>
<keyword id="KW-0418">Kinase</keyword>
<keyword id="KW-0472">Membrane</keyword>
<keyword id="KW-0547">Nucleotide-binding</keyword>
<keyword id="KW-0592">Phosphate transport</keyword>
<keyword id="KW-0597">Phosphoprotein</keyword>
<keyword id="KW-0808">Transferase</keyword>
<keyword id="KW-0812">Transmembrane</keyword>
<keyword id="KW-1133">Transmembrane helix</keyword>
<keyword id="KW-0813">Transport</keyword>
<keyword id="KW-0902">Two-component regulatory system</keyword>